<reference key="1">
    <citation type="submission" date="2006-08" db="EMBL/GenBank/DDBJ databases">
        <title>Complete sequence of Alkalilimnicola ehrilichei MLHE-1.</title>
        <authorList>
            <person name="Copeland A."/>
            <person name="Lucas S."/>
            <person name="Lapidus A."/>
            <person name="Barry K."/>
            <person name="Detter J.C."/>
            <person name="Glavina del Rio T."/>
            <person name="Hammon N."/>
            <person name="Israni S."/>
            <person name="Dalin E."/>
            <person name="Tice H."/>
            <person name="Pitluck S."/>
            <person name="Sims D."/>
            <person name="Brettin T."/>
            <person name="Bruce D."/>
            <person name="Han C."/>
            <person name="Tapia R."/>
            <person name="Gilna P."/>
            <person name="Schmutz J."/>
            <person name="Larimer F."/>
            <person name="Land M."/>
            <person name="Hauser L."/>
            <person name="Kyrpides N."/>
            <person name="Mikhailova N."/>
            <person name="Oremland R.S."/>
            <person name="Hoeft S.E."/>
            <person name="Switzer-Blum J."/>
            <person name="Kulp T."/>
            <person name="King G."/>
            <person name="Tabita R."/>
            <person name="Witte B."/>
            <person name="Santini J.M."/>
            <person name="Basu P."/>
            <person name="Hollibaugh J.T."/>
            <person name="Xie G."/>
            <person name="Stolz J.F."/>
            <person name="Richardson P."/>
        </authorList>
    </citation>
    <scope>NUCLEOTIDE SEQUENCE [LARGE SCALE GENOMIC DNA]</scope>
    <source>
        <strain>ATCC BAA-1101 / DSM 17681 / MLHE-1</strain>
    </source>
</reference>
<protein>
    <recommendedName>
        <fullName evidence="1">ATP synthase subunit a</fullName>
    </recommendedName>
    <alternativeName>
        <fullName evidence="1">ATP synthase F0 sector subunit a</fullName>
    </alternativeName>
    <alternativeName>
        <fullName evidence="1">F-ATPase subunit 6</fullName>
    </alternativeName>
</protein>
<dbReference type="EMBL" id="CP000453">
    <property type="protein sequence ID" value="ABI58215.1"/>
    <property type="molecule type" value="Genomic_DNA"/>
</dbReference>
<dbReference type="RefSeq" id="WP_011630608.1">
    <property type="nucleotide sequence ID" value="NC_008340.1"/>
</dbReference>
<dbReference type="SMR" id="Q0A4M2"/>
<dbReference type="KEGG" id="aeh:Mlg_2875"/>
<dbReference type="eggNOG" id="COG0356">
    <property type="taxonomic scope" value="Bacteria"/>
</dbReference>
<dbReference type="HOGENOM" id="CLU_041018_1_0_6"/>
<dbReference type="OrthoDB" id="9789241at2"/>
<dbReference type="Proteomes" id="UP000001962">
    <property type="component" value="Chromosome"/>
</dbReference>
<dbReference type="GO" id="GO:0005886">
    <property type="term" value="C:plasma membrane"/>
    <property type="evidence" value="ECO:0007669"/>
    <property type="project" value="UniProtKB-SubCell"/>
</dbReference>
<dbReference type="GO" id="GO:0045259">
    <property type="term" value="C:proton-transporting ATP synthase complex"/>
    <property type="evidence" value="ECO:0007669"/>
    <property type="project" value="UniProtKB-KW"/>
</dbReference>
<dbReference type="GO" id="GO:0046933">
    <property type="term" value="F:proton-transporting ATP synthase activity, rotational mechanism"/>
    <property type="evidence" value="ECO:0007669"/>
    <property type="project" value="UniProtKB-UniRule"/>
</dbReference>
<dbReference type="GO" id="GO:0042777">
    <property type="term" value="P:proton motive force-driven plasma membrane ATP synthesis"/>
    <property type="evidence" value="ECO:0007669"/>
    <property type="project" value="TreeGrafter"/>
</dbReference>
<dbReference type="CDD" id="cd00310">
    <property type="entry name" value="ATP-synt_Fo_a_6"/>
    <property type="match status" value="1"/>
</dbReference>
<dbReference type="FunFam" id="1.20.120.220:FF:000002">
    <property type="entry name" value="ATP synthase subunit a"/>
    <property type="match status" value="1"/>
</dbReference>
<dbReference type="Gene3D" id="1.20.120.220">
    <property type="entry name" value="ATP synthase, F0 complex, subunit A"/>
    <property type="match status" value="1"/>
</dbReference>
<dbReference type="HAMAP" id="MF_01393">
    <property type="entry name" value="ATP_synth_a_bact"/>
    <property type="match status" value="1"/>
</dbReference>
<dbReference type="InterPro" id="IPR045082">
    <property type="entry name" value="ATP_syn_F0_a_bact/chloroplast"/>
</dbReference>
<dbReference type="InterPro" id="IPR000568">
    <property type="entry name" value="ATP_synth_F0_asu"/>
</dbReference>
<dbReference type="InterPro" id="IPR023011">
    <property type="entry name" value="ATP_synth_F0_asu_AS"/>
</dbReference>
<dbReference type="InterPro" id="IPR035908">
    <property type="entry name" value="F0_ATP_A_sf"/>
</dbReference>
<dbReference type="NCBIfam" id="TIGR01131">
    <property type="entry name" value="ATP_synt_6_or_A"/>
    <property type="match status" value="1"/>
</dbReference>
<dbReference type="NCBIfam" id="NF004477">
    <property type="entry name" value="PRK05815.1-1"/>
    <property type="match status" value="1"/>
</dbReference>
<dbReference type="PANTHER" id="PTHR42823">
    <property type="entry name" value="ATP SYNTHASE SUBUNIT A, CHLOROPLASTIC"/>
    <property type="match status" value="1"/>
</dbReference>
<dbReference type="PANTHER" id="PTHR42823:SF3">
    <property type="entry name" value="ATP SYNTHASE SUBUNIT A, CHLOROPLASTIC"/>
    <property type="match status" value="1"/>
</dbReference>
<dbReference type="Pfam" id="PF00119">
    <property type="entry name" value="ATP-synt_A"/>
    <property type="match status" value="1"/>
</dbReference>
<dbReference type="PRINTS" id="PR00123">
    <property type="entry name" value="ATPASEA"/>
</dbReference>
<dbReference type="SUPFAM" id="SSF81336">
    <property type="entry name" value="F1F0 ATP synthase subunit A"/>
    <property type="match status" value="1"/>
</dbReference>
<dbReference type="PROSITE" id="PS00449">
    <property type="entry name" value="ATPASE_A"/>
    <property type="match status" value="1"/>
</dbReference>
<sequence length="255" mass="28869">MSGNTALDYIQHHLTNLAVGEGYWTFHVDSLIMSFSLGALFCYLFWLGARRATAGVPSGLQNFVELMVEFVDQTTRETFQGKSRLIAPLALTIFCWIFLMNLMDLVPIDMVPSLMYAAGVDYFKILPTVDLNVTFALSISVFFLIIAYSFKGKGAGGFAKELLFHPFGPWLLPFNLILNIIELIAKPISLSLRLFGNMYAAELIFILISLLPWWIQWALGTPWAIFHILVIPLQAFIFMMLTVVYLSMANEHEEH</sequence>
<evidence type="ECO:0000255" key="1">
    <source>
        <dbReference type="HAMAP-Rule" id="MF_01393"/>
    </source>
</evidence>
<proteinExistence type="inferred from homology"/>
<name>ATP6_ALKEH</name>
<comment type="function">
    <text evidence="1">Key component of the proton channel; it plays a direct role in the translocation of protons across the membrane.</text>
</comment>
<comment type="subunit">
    <text evidence="1">F-type ATPases have 2 components, CF(1) - the catalytic core - and CF(0) - the membrane proton channel. CF(1) has five subunits: alpha(3), beta(3), gamma(1), delta(1), epsilon(1). CF(0) has three main subunits: a(1), b(2) and c(9-12). The alpha and beta chains form an alternating ring which encloses part of the gamma chain. CF(1) is attached to CF(0) by a central stalk formed by the gamma and epsilon chains, while a peripheral stalk is formed by the delta and b chains.</text>
</comment>
<comment type="subcellular location">
    <subcellularLocation>
        <location evidence="1">Cell inner membrane</location>
        <topology evidence="1">Multi-pass membrane protein</topology>
    </subcellularLocation>
</comment>
<comment type="similarity">
    <text evidence="1">Belongs to the ATPase A chain family.</text>
</comment>
<gene>
    <name evidence="1" type="primary">atpB</name>
    <name type="ordered locus">Mlg_2875</name>
</gene>
<accession>Q0A4M2</accession>
<keyword id="KW-0066">ATP synthesis</keyword>
<keyword id="KW-0997">Cell inner membrane</keyword>
<keyword id="KW-1003">Cell membrane</keyword>
<keyword id="KW-0138">CF(0)</keyword>
<keyword id="KW-0375">Hydrogen ion transport</keyword>
<keyword id="KW-0406">Ion transport</keyword>
<keyword id="KW-0472">Membrane</keyword>
<keyword id="KW-1185">Reference proteome</keyword>
<keyword id="KW-0812">Transmembrane</keyword>
<keyword id="KW-1133">Transmembrane helix</keyword>
<keyword id="KW-0813">Transport</keyword>
<feature type="chain" id="PRO_0000362230" description="ATP synthase subunit a">
    <location>
        <begin position="1"/>
        <end position="255"/>
    </location>
</feature>
<feature type="transmembrane region" description="Helical" evidence="1">
    <location>
        <begin position="28"/>
        <end position="48"/>
    </location>
</feature>
<feature type="transmembrane region" description="Helical" evidence="1">
    <location>
        <begin position="86"/>
        <end position="106"/>
    </location>
</feature>
<feature type="transmembrane region" description="Helical" evidence="1">
    <location>
        <begin position="125"/>
        <end position="145"/>
    </location>
</feature>
<feature type="transmembrane region" description="Helical" evidence="1">
    <location>
        <begin position="164"/>
        <end position="184"/>
    </location>
</feature>
<feature type="transmembrane region" description="Helical" evidence="1">
    <location>
        <begin position="203"/>
        <end position="223"/>
    </location>
</feature>
<feature type="transmembrane region" description="Helical" evidence="1">
    <location>
        <begin position="224"/>
        <end position="244"/>
    </location>
</feature>
<organism>
    <name type="scientific">Alkalilimnicola ehrlichii (strain ATCC BAA-1101 / DSM 17681 / MLHE-1)</name>
    <dbReference type="NCBI Taxonomy" id="187272"/>
    <lineage>
        <taxon>Bacteria</taxon>
        <taxon>Pseudomonadati</taxon>
        <taxon>Pseudomonadota</taxon>
        <taxon>Gammaproteobacteria</taxon>
        <taxon>Chromatiales</taxon>
        <taxon>Ectothiorhodospiraceae</taxon>
        <taxon>Alkalilimnicola</taxon>
    </lineage>
</organism>